<reference key="1">
    <citation type="journal article" date="1998" name="Science">
        <title>Complete genome sequence of Treponema pallidum, the syphilis spirochete.</title>
        <authorList>
            <person name="Fraser C.M."/>
            <person name="Norris S.J."/>
            <person name="Weinstock G.M."/>
            <person name="White O."/>
            <person name="Sutton G.G."/>
            <person name="Dodson R.J."/>
            <person name="Gwinn M.L."/>
            <person name="Hickey E.K."/>
            <person name="Clayton R.A."/>
            <person name="Ketchum K.A."/>
            <person name="Sodergren E."/>
            <person name="Hardham J.M."/>
            <person name="McLeod M.P."/>
            <person name="Salzberg S.L."/>
            <person name="Peterson J.D."/>
            <person name="Khalak H.G."/>
            <person name="Richardson D.L."/>
            <person name="Howell J.K."/>
            <person name="Chidambaram M."/>
            <person name="Utterback T.R."/>
            <person name="McDonald L.A."/>
            <person name="Artiach P."/>
            <person name="Bowman C."/>
            <person name="Cotton M.D."/>
            <person name="Fujii C."/>
            <person name="Garland S.A."/>
            <person name="Hatch B."/>
            <person name="Horst K."/>
            <person name="Roberts K.M."/>
            <person name="Sandusky M."/>
            <person name="Weidman J.F."/>
            <person name="Smith H.O."/>
            <person name="Venter J.C."/>
        </authorList>
    </citation>
    <scope>NUCLEOTIDE SEQUENCE [LARGE SCALE GENOMIC DNA]</scope>
    <source>
        <strain>Nichols</strain>
    </source>
</reference>
<dbReference type="EMBL" id="AE000520">
    <property type="protein sequence ID" value="AAC65708.1"/>
    <property type="molecule type" value="Genomic_DNA"/>
</dbReference>
<dbReference type="PIR" id="B71288">
    <property type="entry name" value="B71288"/>
</dbReference>
<dbReference type="RefSeq" id="WP_010882178.1">
    <property type="nucleotide sequence ID" value="NC_021490.2"/>
</dbReference>
<dbReference type="SMR" id="O83715"/>
<dbReference type="IntAct" id="O83715">
    <property type="interactions" value="2"/>
</dbReference>
<dbReference type="TCDB" id="1.B.6.10.1">
    <property type="family name" value="the ompa-ompf porin (oop) family"/>
</dbReference>
<dbReference type="EnsemblBacteria" id="AAC65708">
    <property type="protein sequence ID" value="AAC65708"/>
    <property type="gene ID" value="TP_0733"/>
</dbReference>
<dbReference type="KEGG" id="tpa:TP_0733"/>
<dbReference type="KEGG" id="tpw:TPANIC_0733"/>
<dbReference type="eggNOG" id="ENOG5034C2R">
    <property type="taxonomic scope" value="Bacteria"/>
</dbReference>
<dbReference type="HOGENOM" id="CLU_097950_0_0_12"/>
<dbReference type="OrthoDB" id="369649at2"/>
<dbReference type="Proteomes" id="UP000000811">
    <property type="component" value="Chromosome"/>
</dbReference>
<dbReference type="InterPro" id="IPR011250">
    <property type="entry name" value="OMP/PagP_b-brl"/>
</dbReference>
<dbReference type="NCBIfam" id="NF047328">
    <property type="entry name" value="OMP_TP0733"/>
    <property type="match status" value="1"/>
</dbReference>
<dbReference type="SUPFAM" id="SSF56925">
    <property type="entry name" value="OMPA-like"/>
    <property type="match status" value="1"/>
</dbReference>
<sequence length="219" mass="23327">MSRTFRAWQCVGALCALSPLLPAYSSEGVREVPPSQSPQVVVAYEPIRPGDQLLKIGIVAGCQLYIAGGNGTNGSSSSGTNGNGNGKLLGGGGFHLGYEYFFTKNFSLGGQVSFECYRTTGSNYYFSVPITVNPTYTFAVGRWRIPLSLGVGLNIQSYLSKKAPGLIAEASAGLYYQYTPDWSIGGIVAYTQLGDIASSPDKCRAVGLATIDFGVRYHF</sequence>
<gene>
    <name type="ordered locus">TP_0733</name>
</gene>
<accession>O83715</accession>
<keyword id="KW-1185">Reference proteome</keyword>
<protein>
    <recommendedName>
        <fullName>Uncharacterized protein TP_0733</fullName>
    </recommendedName>
</protein>
<name>Y733_TREPA</name>
<organism>
    <name type="scientific">Treponema pallidum (strain Nichols)</name>
    <dbReference type="NCBI Taxonomy" id="243276"/>
    <lineage>
        <taxon>Bacteria</taxon>
        <taxon>Pseudomonadati</taxon>
        <taxon>Spirochaetota</taxon>
        <taxon>Spirochaetia</taxon>
        <taxon>Spirochaetales</taxon>
        <taxon>Treponemataceae</taxon>
        <taxon>Treponema</taxon>
    </lineage>
</organism>
<proteinExistence type="predicted"/>
<feature type="chain" id="PRO_0000202312" description="Uncharacterized protein TP_0733">
    <location>
        <begin position="1"/>
        <end position="219"/>
    </location>
</feature>
<comment type="similarity">
    <text evidence="1">To T.pallidum TP_0126.</text>
</comment>
<evidence type="ECO:0000305" key="1"/>